<comment type="function">
    <text evidence="2">Could form pH-gated heterotrimeric sodium channels that act as postsynaptic excitatory sensors in the nervous system, generating rapid, transient inward currents that fully desensitize upon extracellular acidification.</text>
</comment>
<comment type="catalytic activity">
    <reaction evidence="3">
        <text>Na(+)(in) = Na(+)(out)</text>
        <dbReference type="Rhea" id="RHEA:34963"/>
        <dbReference type="ChEBI" id="CHEBI:29101"/>
    </reaction>
</comment>
<comment type="activity regulation">
    <text evidence="2">Inhibited by the diuretic drug amiloride.</text>
</comment>
<comment type="subunit">
    <text evidence="2 6">Can form homotrimers; probably non-functional (PubMed:14970195). Heterotrimer; could form functional heterotrimers producing channel with specific properties depending on their composition (By similarity).</text>
</comment>
<comment type="subcellular location">
    <subcellularLocation>
        <location evidence="2">Cell membrane</location>
        <topology evidence="2">Multi-pass membrane protein</topology>
    </subcellularLocation>
</comment>
<comment type="tissue specificity">
    <text evidence="6">Expressed in central nervous system.</text>
</comment>
<comment type="developmental stage">
    <text evidence="6">First expressed by 30 hours post-fertilization (hpf) along the tract of the anterior commissure, where it persisted until 48 hpf. Detected at 48 hpf in the preoptic area, ventral thalamus, and ventral midbrain and weakly in the ventral hindbrain. At 72 and 96 hpf, expressed throughout most of the brain except the dorsal forebrain. Expressed in the retinal ganglion cells.</text>
</comment>
<comment type="similarity">
    <text evidence="8">Belongs to the amiloride-sensitive sodium channel (TC 1.A.6) family. ASIC2 subfamily.</text>
</comment>
<name>ASIC2_DANRE</name>
<feature type="chain" id="PRO_0000181293" description="Acid-sensing ion channel 2">
    <location>
        <begin position="1"/>
        <end position="533"/>
    </location>
</feature>
<feature type="topological domain" description="Cytoplasmic" evidence="4">
    <location>
        <begin position="1"/>
        <end position="68"/>
    </location>
</feature>
<feature type="transmembrane region" description="Helical" evidence="4">
    <location>
        <begin position="69"/>
        <end position="89"/>
    </location>
</feature>
<feature type="topological domain" description="Extracellular" evidence="4">
    <location>
        <begin position="90"/>
        <end position="445"/>
    </location>
</feature>
<feature type="transmembrane region" description="Helical" evidence="4">
    <location>
        <begin position="446"/>
        <end position="466"/>
    </location>
</feature>
<feature type="topological domain" description="Cytoplasmic" evidence="4">
    <location>
        <begin position="467"/>
        <end position="533"/>
    </location>
</feature>
<feature type="region of interest" description="Disordered" evidence="5">
    <location>
        <begin position="1"/>
        <end position="23"/>
    </location>
</feature>
<feature type="short sequence motif" description="GAS motif; ion selectivity filter" evidence="1">
    <location>
        <begin position="462"/>
        <end position="464"/>
    </location>
</feature>
<feature type="compositionally biased region" description="Basic and acidic residues" evidence="5">
    <location>
        <begin position="1"/>
        <end position="16"/>
    </location>
</feature>
<feature type="glycosylation site" description="N-linked (GlcNAc...) asparagine" evidence="4">
    <location>
        <position position="163"/>
    </location>
</feature>
<feature type="glycosylation site" description="N-linked (GlcNAc...) asparagine" evidence="4">
    <location>
        <position position="386"/>
    </location>
</feature>
<feature type="glycosylation site" description="N-linked (GlcNAc...) asparagine" evidence="4">
    <location>
        <position position="413"/>
    </location>
</feature>
<feature type="disulfide bond" evidence="2">
    <location>
        <begin position="113"/>
        <end position="214"/>
    </location>
</feature>
<feature type="disulfide bond" evidence="2">
    <location>
        <begin position="310"/>
        <end position="385"/>
    </location>
</feature>
<feature type="disulfide bond" evidence="2">
    <location>
        <begin position="328"/>
        <end position="381"/>
    </location>
</feature>
<feature type="disulfide bond" evidence="2">
    <location>
        <begin position="332"/>
        <end position="379"/>
    </location>
</feature>
<feature type="disulfide bond" evidence="2">
    <location>
        <begin position="341"/>
        <end position="363"/>
    </location>
</feature>
<feature type="disulfide bond" evidence="2">
    <location>
        <begin position="343"/>
        <end position="355"/>
    </location>
</feature>
<keyword id="KW-1003">Cell membrane</keyword>
<keyword id="KW-1015">Disulfide bond</keyword>
<keyword id="KW-0325">Glycoprotein</keyword>
<keyword id="KW-0407">Ion channel</keyword>
<keyword id="KW-0406">Ion transport</keyword>
<keyword id="KW-0472">Membrane</keyword>
<keyword id="KW-1185">Reference proteome</keyword>
<keyword id="KW-0915">Sodium</keyword>
<keyword id="KW-0894">Sodium channel</keyword>
<keyword id="KW-0739">Sodium transport</keyword>
<keyword id="KW-0812">Transmembrane</keyword>
<keyword id="KW-1133">Transmembrane helix</keyword>
<keyword id="KW-0813">Transport</keyword>
<sequence length="533" mass="59737">MDLKEACGSEASRETESGGMGSLGGHSSWQSFAHRSTLHGLRFIFPYSSSSSSSSSYRSTSRRLLWSAALLASLVLLVLESTERLAYFLSYPHVTSVDAVVSGSLVFPAVTVCNLNAYRFTRLTQNDLYHAGELLALLDVHLQIPEPHLAEPHVLAFLTEKSNFTNYRPKPFSMREFTERVGHDLKEMMLYCRFQGQECSHQDFKTVFTRYGKCYMFNAAEEGKTLRTTMKGGTGNGLEIMLDIQQDEYLPVWGETEETAFEAGVRVQIHSQAEPPFVHELGFGVAPGFQTFVATQEQRLTYLPPPWGECVSRALDSGLFQVYSVSACRIECETRYIVENCNCRMVYMPGDSPYCTPEQYKDCAEPALAALSAVEGTNCICRSPCNMTRYNKELSMVKIPSKTSARYLEKKFNRSEKYITDNILVLDVFFEALNYETIEQKKAYEVAGLLGDIGGQMGLFIGASILTLLELFDYAYEVVKERLLDLLNREEEEESHGEDVSTCDPVVNHSESISHTVSVPLQTTLGTLEEIAC</sequence>
<reference key="1">
    <citation type="journal article" date="2004" name="J. Biol. Chem.">
        <title>A family of acid-sensing ion channels (ASICs) from the zebrafish: widespread expression in the central nervous system suggests a conserved role in neuronal communication.</title>
        <authorList>
            <person name="Paukert M."/>
            <person name="Sidi S."/>
            <person name="Russell C."/>
            <person name="Siba M."/>
            <person name="Wilson S.W."/>
            <person name="Nicolson T."/>
            <person name="Gruender S."/>
        </authorList>
    </citation>
    <scope>NUCLEOTIDE SEQUENCE [MRNA]</scope>
    <scope>SUBUNIT</scope>
    <scope>TISSUE SPECIFICITY</scope>
    <scope>DEVELOPMENTAL STAGE</scope>
</reference>
<protein>
    <recommendedName>
        <fullName evidence="9">Acid-sensing ion channel 2</fullName>
        <shortName evidence="9">ASIC2</shortName>
    </recommendedName>
    <alternativeName>
        <fullName evidence="7">ZASIC2</fullName>
    </alternativeName>
</protein>
<dbReference type="EMBL" id="AJ609618">
    <property type="protein sequence ID" value="CAE81921.1"/>
    <property type="molecule type" value="mRNA"/>
</dbReference>
<dbReference type="RefSeq" id="NP_999953.1">
    <property type="nucleotide sequence ID" value="NM_214788.1"/>
</dbReference>
<dbReference type="RefSeq" id="XP_068072559.1">
    <property type="nucleotide sequence ID" value="XM_068216458.1"/>
</dbReference>
<dbReference type="SMR" id="Q708S5"/>
<dbReference type="FunCoup" id="Q708S5">
    <property type="interactions" value="807"/>
</dbReference>
<dbReference type="STRING" id="7955.ENSDARP00000122509"/>
<dbReference type="GlyCosmos" id="Q708S5">
    <property type="glycosylation" value="3 sites, No reported glycans"/>
</dbReference>
<dbReference type="Ensembl" id="ENSDART00000039517">
    <property type="protein sequence ID" value="ENSDARP00000039516"/>
    <property type="gene ID" value="ENSDARG00000006849"/>
</dbReference>
<dbReference type="Ensembl" id="ENSDART00000137038">
    <property type="protein sequence ID" value="ENSDARP00000122509"/>
    <property type="gene ID" value="ENSDARG00000006849"/>
</dbReference>
<dbReference type="GeneID" id="407669"/>
<dbReference type="KEGG" id="dre:407669"/>
<dbReference type="AGR" id="ZFIN:ZDB-GENE-040513-4"/>
<dbReference type="CTD" id="40"/>
<dbReference type="ZFIN" id="ZDB-GENE-040513-4">
    <property type="gene designation" value="asic2"/>
</dbReference>
<dbReference type="HOGENOM" id="CLU_020415_1_2_1"/>
<dbReference type="InParanoid" id="Q708S5"/>
<dbReference type="OMA" id="QGHCLRR"/>
<dbReference type="OrthoDB" id="5874059at2759"/>
<dbReference type="PhylomeDB" id="Q708S5"/>
<dbReference type="Reactome" id="R-DRE-2672351">
    <property type="pathway name" value="Stimuli-sensing channels"/>
</dbReference>
<dbReference type="PRO" id="PR:Q708S5"/>
<dbReference type="Proteomes" id="UP000000437">
    <property type="component" value="Chromosome 3"/>
</dbReference>
<dbReference type="Bgee" id="ENSDARG00000006849">
    <property type="expression patterns" value="Expressed in brain and 15 other cell types or tissues"/>
</dbReference>
<dbReference type="ExpressionAtlas" id="Q708S5">
    <property type="expression patterns" value="baseline"/>
</dbReference>
<dbReference type="GO" id="GO:0005886">
    <property type="term" value="C:plasma membrane"/>
    <property type="evidence" value="ECO:0000250"/>
    <property type="project" value="UniProtKB"/>
</dbReference>
<dbReference type="GO" id="GO:0015280">
    <property type="term" value="F:ligand-gated sodium channel activity"/>
    <property type="evidence" value="ECO:0000318"/>
    <property type="project" value="GO_Central"/>
</dbReference>
<dbReference type="GO" id="GO:0160125">
    <property type="term" value="F:pH-gated sodium channel activity"/>
    <property type="evidence" value="ECO:0000250"/>
    <property type="project" value="UniProtKB"/>
</dbReference>
<dbReference type="GO" id="GO:0048545">
    <property type="term" value="P:response to steroid hormone"/>
    <property type="evidence" value="ECO:0000270"/>
    <property type="project" value="ZFIN"/>
</dbReference>
<dbReference type="GO" id="GO:0035725">
    <property type="term" value="P:sodium ion transmembrane transport"/>
    <property type="evidence" value="ECO:0000318"/>
    <property type="project" value="GO_Central"/>
</dbReference>
<dbReference type="FunFam" id="1.10.287.820:FF:000001">
    <property type="entry name" value="acid-sensing ion channel 1 isoform X2"/>
    <property type="match status" value="1"/>
</dbReference>
<dbReference type="FunFam" id="1.10.3590.10:FF:000002">
    <property type="entry name" value="acid-sensing ion channel 1 isoform X2"/>
    <property type="match status" value="1"/>
</dbReference>
<dbReference type="FunFam" id="1.10.287.770:FF:000001">
    <property type="entry name" value="Acid-sensing ion channel subunit 1"/>
    <property type="match status" value="1"/>
</dbReference>
<dbReference type="Gene3D" id="1.10.3590.10">
    <property type="entry name" value="acid-sensing ion channel 1 domain"/>
    <property type="match status" value="2"/>
</dbReference>
<dbReference type="Gene3D" id="1.10.287.820">
    <property type="entry name" value="Acid-sensing ion channel domain"/>
    <property type="match status" value="1"/>
</dbReference>
<dbReference type="Gene3D" id="1.10.287.770">
    <property type="entry name" value="YojJ-like"/>
    <property type="match status" value="1"/>
</dbReference>
<dbReference type="InterPro" id="IPR001873">
    <property type="entry name" value="ENaC"/>
</dbReference>
<dbReference type="InterPro" id="IPR004724">
    <property type="entry name" value="ENaC_chordates"/>
</dbReference>
<dbReference type="InterPro" id="IPR020903">
    <property type="entry name" value="ENaC_CS"/>
</dbReference>
<dbReference type="NCBIfam" id="TIGR00859">
    <property type="entry name" value="ENaC"/>
    <property type="match status" value="1"/>
</dbReference>
<dbReference type="PANTHER" id="PTHR11690:SF128">
    <property type="entry name" value="ACID-SENSING ION CHANNEL 2"/>
    <property type="match status" value="1"/>
</dbReference>
<dbReference type="PANTHER" id="PTHR11690">
    <property type="entry name" value="AMILORIDE-SENSITIVE SODIUM CHANNEL-RELATED"/>
    <property type="match status" value="1"/>
</dbReference>
<dbReference type="Pfam" id="PF00858">
    <property type="entry name" value="ASC"/>
    <property type="match status" value="1"/>
</dbReference>
<dbReference type="PRINTS" id="PR01078">
    <property type="entry name" value="AMINACHANNEL"/>
</dbReference>
<dbReference type="PROSITE" id="PS01206">
    <property type="entry name" value="ASC"/>
    <property type="match status" value="1"/>
</dbReference>
<organism>
    <name type="scientific">Danio rerio</name>
    <name type="common">Zebrafish</name>
    <name type="synonym">Brachydanio rerio</name>
    <dbReference type="NCBI Taxonomy" id="7955"/>
    <lineage>
        <taxon>Eukaryota</taxon>
        <taxon>Metazoa</taxon>
        <taxon>Chordata</taxon>
        <taxon>Craniata</taxon>
        <taxon>Vertebrata</taxon>
        <taxon>Euteleostomi</taxon>
        <taxon>Actinopterygii</taxon>
        <taxon>Neopterygii</taxon>
        <taxon>Teleostei</taxon>
        <taxon>Ostariophysi</taxon>
        <taxon>Cypriniformes</taxon>
        <taxon>Danionidae</taxon>
        <taxon>Danioninae</taxon>
        <taxon>Danio</taxon>
    </lineage>
</organism>
<proteinExistence type="evidence at protein level"/>
<gene>
    <name type="primary">asic2</name>
</gene>
<accession>Q708S5</accession>
<evidence type="ECO:0000250" key="1">
    <source>
        <dbReference type="UniProtKB" id="P78348"/>
    </source>
</evidence>
<evidence type="ECO:0000250" key="2">
    <source>
        <dbReference type="UniProtKB" id="Q16515"/>
    </source>
</evidence>
<evidence type="ECO:0000250" key="3">
    <source>
        <dbReference type="UniProtKB" id="Q925H0"/>
    </source>
</evidence>
<evidence type="ECO:0000255" key="4"/>
<evidence type="ECO:0000256" key="5">
    <source>
        <dbReference type="SAM" id="MobiDB-lite"/>
    </source>
</evidence>
<evidence type="ECO:0000269" key="6">
    <source>
    </source>
</evidence>
<evidence type="ECO:0000303" key="7">
    <source>
    </source>
</evidence>
<evidence type="ECO:0000305" key="8"/>
<evidence type="ECO:0000305" key="9">
    <source>
    </source>
</evidence>